<gene>
    <name type="ordered locus">BCE_0959</name>
</gene>
<sequence>MQAPPSFYEGDTLEVAKKLLGQKLVHIVDGIKRSGIIVEVEAYKGPDDKAAHSYGGRRTDRTEVMFGAPGHAYVYLIYGMYHCFNVITAPVGTPQGVLIRALEPVDGIEEIKLARYNKTDITKAQYKNLTNGPGKLCRALGITLEERGVSLQSDTLHIELVREEEHISSQYKITAGPRINIDYAEEAVHYPWRFYYEGHPFVSKK</sequence>
<proteinExistence type="inferred from homology"/>
<evidence type="ECO:0000255" key="1">
    <source>
        <dbReference type="HAMAP-Rule" id="MF_00527"/>
    </source>
</evidence>
<accession>Q73CV5</accession>
<feature type="chain" id="PRO_0000264994" description="Putative 3-methyladenine DNA glycosylase">
    <location>
        <begin position="1"/>
        <end position="205"/>
    </location>
</feature>
<keyword id="KW-0227">DNA damage</keyword>
<keyword id="KW-0234">DNA repair</keyword>
<keyword id="KW-0378">Hydrolase</keyword>
<dbReference type="EC" id="3.2.2.-" evidence="1"/>
<dbReference type="EMBL" id="AE017194">
    <property type="protein sequence ID" value="AAS39890.1"/>
    <property type="molecule type" value="Genomic_DNA"/>
</dbReference>
<dbReference type="SMR" id="Q73CV5"/>
<dbReference type="KEGG" id="bca:BCE_0959"/>
<dbReference type="HOGENOM" id="CLU_060471_0_2_9"/>
<dbReference type="Proteomes" id="UP000002527">
    <property type="component" value="Chromosome"/>
</dbReference>
<dbReference type="GO" id="GO:0003905">
    <property type="term" value="F:alkylbase DNA N-glycosylase activity"/>
    <property type="evidence" value="ECO:0007669"/>
    <property type="project" value="InterPro"/>
</dbReference>
<dbReference type="GO" id="GO:0003677">
    <property type="term" value="F:DNA binding"/>
    <property type="evidence" value="ECO:0007669"/>
    <property type="project" value="InterPro"/>
</dbReference>
<dbReference type="GO" id="GO:0006284">
    <property type="term" value="P:base-excision repair"/>
    <property type="evidence" value="ECO:0007669"/>
    <property type="project" value="InterPro"/>
</dbReference>
<dbReference type="CDD" id="cd00540">
    <property type="entry name" value="AAG"/>
    <property type="match status" value="1"/>
</dbReference>
<dbReference type="FunFam" id="3.10.300.10:FF:000001">
    <property type="entry name" value="Putative 3-methyladenine DNA glycosylase"/>
    <property type="match status" value="1"/>
</dbReference>
<dbReference type="Gene3D" id="3.10.300.10">
    <property type="entry name" value="Methylpurine-DNA glycosylase (MPG)"/>
    <property type="match status" value="1"/>
</dbReference>
<dbReference type="HAMAP" id="MF_00527">
    <property type="entry name" value="3MGH"/>
    <property type="match status" value="1"/>
</dbReference>
<dbReference type="InterPro" id="IPR011034">
    <property type="entry name" value="Formyl_transferase-like_C_sf"/>
</dbReference>
<dbReference type="InterPro" id="IPR003180">
    <property type="entry name" value="MPG"/>
</dbReference>
<dbReference type="InterPro" id="IPR036995">
    <property type="entry name" value="MPG_sf"/>
</dbReference>
<dbReference type="NCBIfam" id="TIGR00567">
    <property type="entry name" value="3mg"/>
    <property type="match status" value="1"/>
</dbReference>
<dbReference type="NCBIfam" id="NF002001">
    <property type="entry name" value="PRK00802.1-1"/>
    <property type="match status" value="1"/>
</dbReference>
<dbReference type="NCBIfam" id="NF002003">
    <property type="entry name" value="PRK00802.1-3"/>
    <property type="match status" value="1"/>
</dbReference>
<dbReference type="PANTHER" id="PTHR10429">
    <property type="entry name" value="DNA-3-METHYLADENINE GLYCOSYLASE"/>
    <property type="match status" value="1"/>
</dbReference>
<dbReference type="PANTHER" id="PTHR10429:SF0">
    <property type="entry name" value="DNA-3-METHYLADENINE GLYCOSYLASE"/>
    <property type="match status" value="1"/>
</dbReference>
<dbReference type="Pfam" id="PF02245">
    <property type="entry name" value="Pur_DNA_glyco"/>
    <property type="match status" value="1"/>
</dbReference>
<dbReference type="SUPFAM" id="SSF50486">
    <property type="entry name" value="FMT C-terminal domain-like"/>
    <property type="match status" value="1"/>
</dbReference>
<comment type="similarity">
    <text evidence="1">Belongs to the DNA glycosylase MPG family.</text>
</comment>
<organism>
    <name type="scientific">Bacillus cereus (strain ATCC 10987 / NRS 248)</name>
    <dbReference type="NCBI Taxonomy" id="222523"/>
    <lineage>
        <taxon>Bacteria</taxon>
        <taxon>Bacillati</taxon>
        <taxon>Bacillota</taxon>
        <taxon>Bacilli</taxon>
        <taxon>Bacillales</taxon>
        <taxon>Bacillaceae</taxon>
        <taxon>Bacillus</taxon>
        <taxon>Bacillus cereus group</taxon>
    </lineage>
</organism>
<protein>
    <recommendedName>
        <fullName evidence="1">Putative 3-methyladenine DNA glycosylase</fullName>
        <ecNumber evidence="1">3.2.2.-</ecNumber>
    </recommendedName>
</protein>
<name>3MGH_BACC1</name>
<reference key="1">
    <citation type="journal article" date="2004" name="Nucleic Acids Res.">
        <title>The genome sequence of Bacillus cereus ATCC 10987 reveals metabolic adaptations and a large plasmid related to Bacillus anthracis pXO1.</title>
        <authorList>
            <person name="Rasko D.A."/>
            <person name="Ravel J."/>
            <person name="Oekstad O.A."/>
            <person name="Helgason E."/>
            <person name="Cer R.Z."/>
            <person name="Jiang L."/>
            <person name="Shores K.A."/>
            <person name="Fouts D.E."/>
            <person name="Tourasse N.J."/>
            <person name="Angiuoli S.V."/>
            <person name="Kolonay J.F."/>
            <person name="Nelson W.C."/>
            <person name="Kolstoe A.-B."/>
            <person name="Fraser C.M."/>
            <person name="Read T.D."/>
        </authorList>
    </citation>
    <scope>NUCLEOTIDE SEQUENCE [LARGE SCALE GENOMIC DNA]</scope>
    <source>
        <strain>ATCC 10987 / NRS 248</strain>
    </source>
</reference>